<keyword id="KW-0249">Electron transport</keyword>
<keyword id="KW-0349">Heme</keyword>
<keyword id="KW-0408">Iron</keyword>
<keyword id="KW-0472">Membrane</keyword>
<keyword id="KW-0479">Metal-binding</keyword>
<keyword id="KW-0496">Mitochondrion</keyword>
<keyword id="KW-0999">Mitochondrion inner membrane</keyword>
<keyword id="KW-0679">Respiratory chain</keyword>
<keyword id="KW-0812">Transmembrane</keyword>
<keyword id="KW-1133">Transmembrane helix</keyword>
<keyword id="KW-0813">Transport</keyword>
<keyword id="KW-0830">Ubiquinone</keyword>
<name>CYB_CORCU</name>
<geneLocation type="mitochondrion"/>
<reference key="1">
    <citation type="journal article" date="2000" name="Mol. Phylogenet. Evol.">
        <title>Higher-level phylogeny of trogoniformes.</title>
        <authorList>
            <person name="Espinosa de los Monteros A."/>
        </authorList>
    </citation>
    <scope>NUCLEOTIDE SEQUENCE [GENOMIC DNA]</scope>
</reference>
<evidence type="ECO:0000250" key="1"/>
<evidence type="ECO:0000250" key="2">
    <source>
        <dbReference type="UniProtKB" id="P00157"/>
    </source>
</evidence>
<evidence type="ECO:0000255" key="3">
    <source>
        <dbReference type="PROSITE-ProRule" id="PRU00967"/>
    </source>
</evidence>
<evidence type="ECO:0000255" key="4">
    <source>
        <dbReference type="PROSITE-ProRule" id="PRU00968"/>
    </source>
</evidence>
<accession>Q9ZZD4</accession>
<comment type="function">
    <text evidence="2">Component of the ubiquinol-cytochrome c reductase complex (complex III or cytochrome b-c1 complex) that is part of the mitochondrial respiratory chain. The b-c1 complex mediates electron transfer from ubiquinol to cytochrome c. Contributes to the generation of a proton gradient across the mitochondrial membrane that is then used for ATP synthesis.</text>
</comment>
<comment type="cofactor">
    <cofactor evidence="2">
        <name>heme b</name>
        <dbReference type="ChEBI" id="CHEBI:60344"/>
    </cofactor>
    <text evidence="2">Binds 2 heme b groups non-covalently.</text>
</comment>
<comment type="subunit">
    <text evidence="2">The cytochrome bc1 complex contains 11 subunits: 3 respiratory subunits (MT-CYB, CYC1 and UQCRFS1), 2 core proteins (UQCRC1 and UQCRC2) and 6 low-molecular weight proteins (UQCRH/QCR6, UQCRB/QCR7, UQCRQ/QCR8, UQCR10/QCR9, UQCR11/QCR10 and a cleavage product of UQCRFS1). This cytochrome bc1 complex then forms a dimer.</text>
</comment>
<comment type="subcellular location">
    <subcellularLocation>
        <location evidence="2">Mitochondrion inner membrane</location>
        <topology evidence="2">Multi-pass membrane protein</topology>
    </subcellularLocation>
</comment>
<comment type="miscellaneous">
    <text evidence="1">Heme 1 (or BL or b562) is low-potential and absorbs at about 562 nm, and heme 2 (or BH or b566) is high-potential and absorbs at about 566 nm.</text>
</comment>
<comment type="similarity">
    <text evidence="3 4">Belongs to the cytochrome b family.</text>
</comment>
<comment type="caution">
    <text evidence="2">The full-length protein contains only eight transmembrane helices, not nine as predicted by bioinformatics tools.</text>
</comment>
<proteinExistence type="inferred from homology"/>
<organism>
    <name type="scientific">Coracias caudatus</name>
    <name type="common">Lilac-breasted roller</name>
    <dbReference type="NCBI Taxonomy" id="56292"/>
    <lineage>
        <taxon>Eukaryota</taxon>
        <taxon>Metazoa</taxon>
        <taxon>Chordata</taxon>
        <taxon>Craniata</taxon>
        <taxon>Vertebrata</taxon>
        <taxon>Euteleostomi</taxon>
        <taxon>Archelosauria</taxon>
        <taxon>Archosauria</taxon>
        <taxon>Dinosauria</taxon>
        <taxon>Saurischia</taxon>
        <taxon>Theropoda</taxon>
        <taxon>Coelurosauria</taxon>
        <taxon>Aves</taxon>
        <taxon>Neognathae</taxon>
        <taxon>Neoaves</taxon>
        <taxon>Telluraves</taxon>
        <taxon>Coraciimorphae</taxon>
        <taxon>Coraciiformes</taxon>
        <taxon>Coraciidae</taxon>
        <taxon>Coracias</taxon>
    </lineage>
</organism>
<dbReference type="EMBL" id="U89184">
    <property type="protein sequence ID" value="AAD00679.1"/>
    <property type="molecule type" value="Genomic_DNA"/>
</dbReference>
<dbReference type="SMR" id="Q9ZZD4"/>
<dbReference type="GO" id="GO:0005743">
    <property type="term" value="C:mitochondrial inner membrane"/>
    <property type="evidence" value="ECO:0007669"/>
    <property type="project" value="UniProtKB-SubCell"/>
</dbReference>
<dbReference type="GO" id="GO:0045275">
    <property type="term" value="C:respiratory chain complex III"/>
    <property type="evidence" value="ECO:0007669"/>
    <property type="project" value="InterPro"/>
</dbReference>
<dbReference type="GO" id="GO:0046872">
    <property type="term" value="F:metal ion binding"/>
    <property type="evidence" value="ECO:0007669"/>
    <property type="project" value="UniProtKB-KW"/>
</dbReference>
<dbReference type="GO" id="GO:0008121">
    <property type="term" value="F:ubiquinol-cytochrome-c reductase activity"/>
    <property type="evidence" value="ECO:0007669"/>
    <property type="project" value="InterPro"/>
</dbReference>
<dbReference type="GO" id="GO:0006122">
    <property type="term" value="P:mitochondrial electron transport, ubiquinol to cytochrome c"/>
    <property type="evidence" value="ECO:0007669"/>
    <property type="project" value="TreeGrafter"/>
</dbReference>
<dbReference type="CDD" id="cd00290">
    <property type="entry name" value="cytochrome_b_C"/>
    <property type="match status" value="1"/>
</dbReference>
<dbReference type="CDD" id="cd00284">
    <property type="entry name" value="Cytochrome_b_N"/>
    <property type="match status" value="1"/>
</dbReference>
<dbReference type="FunFam" id="1.20.810.10:FF:000002">
    <property type="entry name" value="Cytochrome b"/>
    <property type="match status" value="1"/>
</dbReference>
<dbReference type="Gene3D" id="1.20.810.10">
    <property type="entry name" value="Cytochrome Bc1 Complex, Chain C"/>
    <property type="match status" value="1"/>
</dbReference>
<dbReference type="InterPro" id="IPR005798">
    <property type="entry name" value="Cyt_b/b6_C"/>
</dbReference>
<dbReference type="InterPro" id="IPR036150">
    <property type="entry name" value="Cyt_b/b6_C_sf"/>
</dbReference>
<dbReference type="InterPro" id="IPR005797">
    <property type="entry name" value="Cyt_b/b6_N"/>
</dbReference>
<dbReference type="InterPro" id="IPR027387">
    <property type="entry name" value="Cytb/b6-like_sf"/>
</dbReference>
<dbReference type="InterPro" id="IPR030689">
    <property type="entry name" value="Cytochrome_b"/>
</dbReference>
<dbReference type="InterPro" id="IPR048260">
    <property type="entry name" value="Cytochrome_b_C_euk/bac"/>
</dbReference>
<dbReference type="InterPro" id="IPR048259">
    <property type="entry name" value="Cytochrome_b_N_euk/bac"/>
</dbReference>
<dbReference type="InterPro" id="IPR016174">
    <property type="entry name" value="Di-haem_cyt_TM"/>
</dbReference>
<dbReference type="PANTHER" id="PTHR19271">
    <property type="entry name" value="CYTOCHROME B"/>
    <property type="match status" value="1"/>
</dbReference>
<dbReference type="PANTHER" id="PTHR19271:SF16">
    <property type="entry name" value="CYTOCHROME B"/>
    <property type="match status" value="1"/>
</dbReference>
<dbReference type="Pfam" id="PF00032">
    <property type="entry name" value="Cytochrom_B_C"/>
    <property type="match status" value="1"/>
</dbReference>
<dbReference type="Pfam" id="PF00033">
    <property type="entry name" value="Cytochrome_B"/>
    <property type="match status" value="1"/>
</dbReference>
<dbReference type="PIRSF" id="PIRSF038885">
    <property type="entry name" value="COB"/>
    <property type="match status" value="1"/>
</dbReference>
<dbReference type="SUPFAM" id="SSF81648">
    <property type="entry name" value="a domain/subunit of cytochrome bc1 complex (Ubiquinol-cytochrome c reductase)"/>
    <property type="match status" value="1"/>
</dbReference>
<dbReference type="SUPFAM" id="SSF81342">
    <property type="entry name" value="Transmembrane di-heme cytochromes"/>
    <property type="match status" value="1"/>
</dbReference>
<dbReference type="PROSITE" id="PS51003">
    <property type="entry name" value="CYTB_CTER"/>
    <property type="match status" value="1"/>
</dbReference>
<dbReference type="PROSITE" id="PS51002">
    <property type="entry name" value="CYTB_NTER"/>
    <property type="match status" value="1"/>
</dbReference>
<sequence length="380" mass="42649">MAPNLRKSHPLLKMVNNSLIDLPTPPNISAWWNFGSLLGICLVTQILTGLLLAMHYTADTSLAFSSVAHTCRNVQYGWLIRNLHANGASLFFICIYLHIGRGFYYGSYLYKETWNTGVILLLTLMATAFVGYVLPWGQMSFWGATVITNLFSAFPYIGQTLVEWAWGGFSVDNPTLTRFFALHFLLPFMIAGLTLIHLTFLHESGSNNPLGIVSNCDKIPFHPYFSLKDFLGFALMLFLLTALALFTPTLLGDPENFTPANPLVTPPHIKPEWYFLFAYAILRSIPNKLGGVLALAASVLVLLLVPFLHKSKQRTMTFRPLSQTLFWILVSNLFILTWIGSQPVEDPFITIGQLASITYFTIILILFPIISSLENKILNY</sequence>
<feature type="chain" id="PRO_0000060809" description="Cytochrome b">
    <location>
        <begin position="1"/>
        <end position="380"/>
    </location>
</feature>
<feature type="transmembrane region" description="Helical" evidence="2">
    <location>
        <begin position="34"/>
        <end position="54"/>
    </location>
</feature>
<feature type="transmembrane region" description="Helical" evidence="2">
    <location>
        <begin position="78"/>
        <end position="99"/>
    </location>
</feature>
<feature type="transmembrane region" description="Helical" evidence="2">
    <location>
        <begin position="114"/>
        <end position="134"/>
    </location>
</feature>
<feature type="transmembrane region" description="Helical" evidence="2">
    <location>
        <begin position="179"/>
        <end position="199"/>
    </location>
</feature>
<feature type="transmembrane region" description="Helical" evidence="2">
    <location>
        <begin position="227"/>
        <end position="247"/>
    </location>
</feature>
<feature type="transmembrane region" description="Helical" evidence="2">
    <location>
        <begin position="289"/>
        <end position="309"/>
    </location>
</feature>
<feature type="transmembrane region" description="Helical" evidence="2">
    <location>
        <begin position="321"/>
        <end position="341"/>
    </location>
</feature>
<feature type="transmembrane region" description="Helical" evidence="2">
    <location>
        <begin position="348"/>
        <end position="368"/>
    </location>
</feature>
<feature type="binding site" description="axial binding residue" evidence="2">
    <location>
        <position position="84"/>
    </location>
    <ligand>
        <name>heme b</name>
        <dbReference type="ChEBI" id="CHEBI:60344"/>
        <label>b562</label>
    </ligand>
    <ligandPart>
        <name>Fe</name>
        <dbReference type="ChEBI" id="CHEBI:18248"/>
    </ligandPart>
</feature>
<feature type="binding site" description="axial binding residue" evidence="2">
    <location>
        <position position="98"/>
    </location>
    <ligand>
        <name>heme b</name>
        <dbReference type="ChEBI" id="CHEBI:60344"/>
        <label>b566</label>
    </ligand>
    <ligandPart>
        <name>Fe</name>
        <dbReference type="ChEBI" id="CHEBI:18248"/>
    </ligandPart>
</feature>
<feature type="binding site" description="axial binding residue" evidence="2">
    <location>
        <position position="183"/>
    </location>
    <ligand>
        <name>heme b</name>
        <dbReference type="ChEBI" id="CHEBI:60344"/>
        <label>b562</label>
    </ligand>
    <ligandPart>
        <name>Fe</name>
        <dbReference type="ChEBI" id="CHEBI:18248"/>
    </ligandPart>
</feature>
<feature type="binding site" description="axial binding residue" evidence="2">
    <location>
        <position position="197"/>
    </location>
    <ligand>
        <name>heme b</name>
        <dbReference type="ChEBI" id="CHEBI:60344"/>
        <label>b566</label>
    </ligand>
    <ligandPart>
        <name>Fe</name>
        <dbReference type="ChEBI" id="CHEBI:18248"/>
    </ligandPart>
</feature>
<feature type="binding site" evidence="2">
    <location>
        <position position="202"/>
    </location>
    <ligand>
        <name>a ubiquinone</name>
        <dbReference type="ChEBI" id="CHEBI:16389"/>
    </ligand>
</feature>
<gene>
    <name type="primary">MT-CYB</name>
    <name type="synonym">COB</name>
    <name type="synonym">CYTB</name>
    <name type="synonym">MTCYB</name>
</gene>
<protein>
    <recommendedName>
        <fullName>Cytochrome b</fullName>
    </recommendedName>
    <alternativeName>
        <fullName>Complex III subunit 3</fullName>
    </alternativeName>
    <alternativeName>
        <fullName>Complex III subunit III</fullName>
    </alternativeName>
    <alternativeName>
        <fullName>Cytochrome b-c1 complex subunit 3</fullName>
    </alternativeName>
    <alternativeName>
        <fullName>Ubiquinol-cytochrome-c reductase complex cytochrome b subunit</fullName>
    </alternativeName>
</protein>